<keyword id="KW-0002">3D-structure</keyword>
<keyword id="KW-0007">Acetylation</keyword>
<keyword id="KW-0143">Chaperone</keyword>
<keyword id="KW-0963">Cytoplasm</keyword>
<keyword id="KW-0903">Direct protein sequencing</keyword>
<keyword id="KW-1017">Isopeptide bond</keyword>
<keyword id="KW-1185">Reference proteome</keyword>
<keyword id="KW-0346">Stress response</keyword>
<keyword id="KW-0832">Ubl conjugation</keyword>
<accession>P9WPE5</accession>
<accession>L0TFJ8</accession>
<accession>P09621</accession>
<sequence length="100" mass="10804">MAKVNIKPLEDKILVQANEAETTTASGLVIPDTAKEKPQEGTVVAVGPGRWDEDGEKRIPLDVAEGDTVIYSKYGGTEIKYNGEEYLILSARDVLAVVSK</sequence>
<protein>
    <recommendedName>
        <fullName evidence="1">Co-chaperonin GroES</fullName>
    </recommendedName>
    <alternativeName>
        <fullName evidence="9">10 kDa antigen</fullName>
    </alternativeName>
    <alternativeName>
        <fullName evidence="1">10 kDa chaperonin</fullName>
    </alternativeName>
    <alternativeName>
        <fullName evidence="8">BCG-A heat shock protein</fullName>
    </alternativeName>
    <alternativeName>
        <fullName evidence="1">Chaperonin-10</fullName>
        <shortName evidence="1">Cpn10</shortName>
    </alternativeName>
</protein>
<organism>
    <name type="scientific">Mycobacterium tuberculosis (strain ATCC 25618 / H37Rv)</name>
    <dbReference type="NCBI Taxonomy" id="83332"/>
    <lineage>
        <taxon>Bacteria</taxon>
        <taxon>Bacillati</taxon>
        <taxon>Actinomycetota</taxon>
        <taxon>Actinomycetes</taxon>
        <taxon>Mycobacteriales</taxon>
        <taxon>Mycobacteriaceae</taxon>
        <taxon>Mycobacterium</taxon>
        <taxon>Mycobacterium tuberculosis complex</taxon>
    </lineage>
</organism>
<dbReference type="EMBL" id="X60350">
    <property type="protein sequence ID" value="CAA42908.1"/>
    <property type="molecule type" value="Genomic_DNA"/>
</dbReference>
<dbReference type="EMBL" id="M25258">
    <property type="protein sequence ID" value="AAA25340.1"/>
    <property type="molecule type" value="Genomic_DNA"/>
</dbReference>
<dbReference type="EMBL" id="X13739">
    <property type="protein sequence ID" value="CAA32003.1"/>
    <property type="molecule type" value="Genomic_DNA"/>
</dbReference>
<dbReference type="EMBL" id="AL123456">
    <property type="protein sequence ID" value="CCP46240.1"/>
    <property type="molecule type" value="Genomic_DNA"/>
</dbReference>
<dbReference type="PIR" id="S01381">
    <property type="entry name" value="BVMYBA"/>
</dbReference>
<dbReference type="RefSeq" id="NP_217935.1">
    <property type="nucleotide sequence ID" value="NC_000962.3"/>
</dbReference>
<dbReference type="RefSeq" id="WP_003418028.1">
    <property type="nucleotide sequence ID" value="NZ_NVQJ01000027.1"/>
</dbReference>
<dbReference type="PDB" id="1HX5">
    <property type="method" value="X-ray"/>
    <property type="resolution" value="3.50 A"/>
    <property type="chains" value="A/B/C/D/E/F/G=2-100"/>
</dbReference>
<dbReference type="PDB" id="1P3H">
    <property type="method" value="X-ray"/>
    <property type="resolution" value="2.80 A"/>
    <property type="chains" value="A/B/C/D/E/F/G/H/I/J/K/L/M/N=2-100"/>
</dbReference>
<dbReference type="PDB" id="1P82">
    <property type="method" value="NMR"/>
    <property type="chains" value="A=2-26"/>
</dbReference>
<dbReference type="PDB" id="1P83">
    <property type="method" value="NMR"/>
    <property type="chains" value="A=2-26"/>
</dbReference>
<dbReference type="PDBsum" id="1HX5"/>
<dbReference type="PDBsum" id="1P3H"/>
<dbReference type="PDBsum" id="1P82"/>
<dbReference type="PDBsum" id="1P83"/>
<dbReference type="SMR" id="P9WPE5"/>
<dbReference type="FunCoup" id="P9WPE5">
    <property type="interactions" value="372"/>
</dbReference>
<dbReference type="STRING" id="83332.Rv3418c"/>
<dbReference type="iPTMnet" id="P9WPE5"/>
<dbReference type="PaxDb" id="83332-Rv3418c"/>
<dbReference type="ABCD" id="P9WPE5">
    <property type="antibodies" value="1 sequenced antibody"/>
</dbReference>
<dbReference type="DNASU" id="887583"/>
<dbReference type="GeneID" id="66599586"/>
<dbReference type="GeneID" id="887583"/>
<dbReference type="KEGG" id="mtu:Rv3418c"/>
<dbReference type="KEGG" id="mtv:RVBD_3418c"/>
<dbReference type="TubercuList" id="Rv3418c"/>
<dbReference type="eggNOG" id="COG0234">
    <property type="taxonomic scope" value="Bacteria"/>
</dbReference>
<dbReference type="InParanoid" id="P9WPE5"/>
<dbReference type="OrthoDB" id="9806791at2"/>
<dbReference type="PhylomeDB" id="P9WPE5"/>
<dbReference type="EvolutionaryTrace" id="P9WPE5"/>
<dbReference type="Proteomes" id="UP000001584">
    <property type="component" value="Chromosome"/>
</dbReference>
<dbReference type="GO" id="GO:0005829">
    <property type="term" value="C:cytosol"/>
    <property type="evidence" value="ECO:0007005"/>
    <property type="project" value="MTBBASE"/>
</dbReference>
<dbReference type="GO" id="GO:0005576">
    <property type="term" value="C:extracellular region"/>
    <property type="evidence" value="ECO:0007005"/>
    <property type="project" value="MTBBASE"/>
</dbReference>
<dbReference type="GO" id="GO:0009274">
    <property type="term" value="C:peptidoglycan-based cell wall"/>
    <property type="evidence" value="ECO:0007005"/>
    <property type="project" value="MTBBASE"/>
</dbReference>
<dbReference type="GO" id="GO:0005886">
    <property type="term" value="C:plasma membrane"/>
    <property type="evidence" value="ECO:0007005"/>
    <property type="project" value="MTBBASE"/>
</dbReference>
<dbReference type="GO" id="GO:0005524">
    <property type="term" value="F:ATP binding"/>
    <property type="evidence" value="ECO:0007669"/>
    <property type="project" value="InterPro"/>
</dbReference>
<dbReference type="GO" id="GO:0046872">
    <property type="term" value="F:metal ion binding"/>
    <property type="evidence" value="ECO:0000314"/>
    <property type="project" value="MTBBASE"/>
</dbReference>
<dbReference type="GO" id="GO:0044183">
    <property type="term" value="F:protein folding chaperone"/>
    <property type="evidence" value="ECO:0007669"/>
    <property type="project" value="InterPro"/>
</dbReference>
<dbReference type="GO" id="GO:0051087">
    <property type="term" value="F:protein-folding chaperone binding"/>
    <property type="evidence" value="ECO:0000318"/>
    <property type="project" value="GO_Central"/>
</dbReference>
<dbReference type="GO" id="GO:0051082">
    <property type="term" value="F:unfolded protein binding"/>
    <property type="evidence" value="ECO:0000318"/>
    <property type="project" value="GO_Central"/>
</dbReference>
<dbReference type="GO" id="GO:0035375">
    <property type="term" value="F:zymogen binding"/>
    <property type="evidence" value="ECO:0000353"/>
    <property type="project" value="CAFA"/>
</dbReference>
<dbReference type="GO" id="GO:0034605">
    <property type="term" value="P:cellular response to heat"/>
    <property type="evidence" value="ECO:0000315"/>
    <property type="project" value="MTBBASE"/>
</dbReference>
<dbReference type="GO" id="GO:0051085">
    <property type="term" value="P:chaperone cofactor-dependent protein refolding"/>
    <property type="evidence" value="ECO:0000318"/>
    <property type="project" value="GO_Central"/>
</dbReference>
<dbReference type="GO" id="GO:0006355">
    <property type="term" value="P:regulation of DNA-templated transcription"/>
    <property type="evidence" value="ECO:0000315"/>
    <property type="project" value="MTBBASE"/>
</dbReference>
<dbReference type="GO" id="GO:0046677">
    <property type="term" value="P:response to antibiotic"/>
    <property type="evidence" value="ECO:0000270"/>
    <property type="project" value="MTBBASE"/>
</dbReference>
<dbReference type="GO" id="GO:0009408">
    <property type="term" value="P:response to heat"/>
    <property type="evidence" value="ECO:0000270"/>
    <property type="project" value="MTBBASE"/>
</dbReference>
<dbReference type="CDD" id="cd00320">
    <property type="entry name" value="cpn10"/>
    <property type="match status" value="1"/>
</dbReference>
<dbReference type="FunFam" id="2.30.33.40:FF:000001">
    <property type="entry name" value="10 kDa chaperonin"/>
    <property type="match status" value="1"/>
</dbReference>
<dbReference type="Gene3D" id="2.30.33.40">
    <property type="entry name" value="GroES chaperonin"/>
    <property type="match status" value="1"/>
</dbReference>
<dbReference type="HAMAP" id="MF_00580">
    <property type="entry name" value="CH10"/>
    <property type="match status" value="1"/>
</dbReference>
<dbReference type="InterPro" id="IPR020818">
    <property type="entry name" value="Chaperonin_GroES"/>
</dbReference>
<dbReference type="InterPro" id="IPR037124">
    <property type="entry name" value="Chaperonin_GroES_sf"/>
</dbReference>
<dbReference type="InterPro" id="IPR018369">
    <property type="entry name" value="Chaprnonin_Cpn10_CS"/>
</dbReference>
<dbReference type="InterPro" id="IPR011032">
    <property type="entry name" value="GroES-like_sf"/>
</dbReference>
<dbReference type="NCBIfam" id="NF001530">
    <property type="entry name" value="PRK00364.1-6"/>
    <property type="match status" value="1"/>
</dbReference>
<dbReference type="NCBIfam" id="NF001531">
    <property type="entry name" value="PRK00364.2-2"/>
    <property type="match status" value="1"/>
</dbReference>
<dbReference type="NCBIfam" id="NF001533">
    <property type="entry name" value="PRK00364.2-4"/>
    <property type="match status" value="1"/>
</dbReference>
<dbReference type="NCBIfam" id="NF001534">
    <property type="entry name" value="PRK00364.2-5"/>
    <property type="match status" value="1"/>
</dbReference>
<dbReference type="PANTHER" id="PTHR10772">
    <property type="entry name" value="10 KDA HEAT SHOCK PROTEIN"/>
    <property type="match status" value="1"/>
</dbReference>
<dbReference type="PANTHER" id="PTHR10772:SF58">
    <property type="entry name" value="CO-CHAPERONIN GROES"/>
    <property type="match status" value="1"/>
</dbReference>
<dbReference type="Pfam" id="PF00166">
    <property type="entry name" value="Cpn10"/>
    <property type="match status" value="1"/>
</dbReference>
<dbReference type="PRINTS" id="PR00297">
    <property type="entry name" value="CHAPERONIN10"/>
</dbReference>
<dbReference type="SMART" id="SM00883">
    <property type="entry name" value="Cpn10"/>
    <property type="match status" value="1"/>
</dbReference>
<dbReference type="SUPFAM" id="SSF50129">
    <property type="entry name" value="GroES-like"/>
    <property type="match status" value="1"/>
</dbReference>
<dbReference type="PROSITE" id="PS00681">
    <property type="entry name" value="CHAPERONINS_CPN10"/>
    <property type="match status" value="1"/>
</dbReference>
<comment type="function">
    <text evidence="1">Together with the chaperonin GroEL, plays an essential role in assisting protein folding. The GroEL-GroES system forms a nano-cage that allows encapsulation of the non-native substrate proteins and provides a physical environment optimized to promote and accelerate protein folding. GroES binds to the apical surface of the GroEL ring, thereby capping the opening of the GroEL channel.</text>
</comment>
<comment type="subunit">
    <text evidence="2 6 7">Heptamer of 7 subunits arranged in a domed ring (PubMed:12837792, Ref.11). 2 rings join in their base to form a spherical cage-like structure; both heptamers and tetradecamers exist in solution (PubMed:12837792). Interacts with RimI (PubMed:27353550).</text>
</comment>
<comment type="subcellular location">
    <subcellularLocation>
        <location evidence="1">Cytoplasm</location>
    </subcellularLocation>
</comment>
<comment type="induction">
    <text evidence="4">Induced in response to heat shock (45 degrees Celsius), pH 4, pH 10, ethanol, H(2)O(2), hyperosmolarity and starvation (PubMed:18227175).</text>
</comment>
<comment type="PTM">
    <text evidence="6">N-terminus is acetylated by RimI.</text>
</comment>
<comment type="disruption phenotype">
    <text evidence="4">Essential, it cannot be deleted.</text>
</comment>
<comment type="similarity">
    <text evidence="1 10">Belongs to the GroES chaperonin family.</text>
</comment>
<name>CH10_MYCTU</name>
<evidence type="ECO:0000255" key="1">
    <source>
        <dbReference type="HAMAP-Rule" id="MF_00580"/>
    </source>
</evidence>
<evidence type="ECO:0000269" key="2">
    <source>
    </source>
</evidence>
<evidence type="ECO:0000269" key="3">
    <source>
    </source>
</evidence>
<evidence type="ECO:0000269" key="4">
    <source>
    </source>
</evidence>
<evidence type="ECO:0000269" key="5">
    <source>
    </source>
</evidence>
<evidence type="ECO:0000269" key="6">
    <source>
    </source>
</evidence>
<evidence type="ECO:0000269" key="7">
    <source ref="11"/>
</evidence>
<evidence type="ECO:0000303" key="8">
    <source>
    </source>
</evidence>
<evidence type="ECO:0000303" key="9">
    <source>
    </source>
</evidence>
<evidence type="ECO:0000305" key="10"/>
<evidence type="ECO:0007744" key="11">
    <source>
    </source>
</evidence>
<evidence type="ECO:0007829" key="12">
    <source>
        <dbReference type="PDB" id="1HX5"/>
    </source>
</evidence>
<evidence type="ECO:0007829" key="13">
    <source>
        <dbReference type="PDB" id="1P3H"/>
    </source>
</evidence>
<evidence type="ECO:0007829" key="14">
    <source>
        <dbReference type="PDB" id="1P83"/>
    </source>
</evidence>
<reference key="1">
    <citation type="journal article" date="1988" name="Nucleic Acids Res.">
        <title>A major antigen from Mycobacterium tuberculosis which is homologous to the heat shock proteins groES from E. coli and the htpA gene product of Coxiella burneti.</title>
        <authorList>
            <person name="Baird P.N."/>
            <person name="Hall L.M."/>
            <person name="Coates A.R.M."/>
        </authorList>
    </citation>
    <scope>NUCLEOTIDE SEQUENCE [GENOMIC DNA]</scope>
    <source>
        <strain>ATCC 25618 / H37Rv</strain>
    </source>
</reference>
<reference key="2">
    <citation type="journal article" date="1989" name="J. Gen. Microbiol.">
        <title>Cloning and sequence analysis of the 10 kDa antigen gene of Mycobacterium tuberculosis.</title>
        <authorList>
            <person name="Baird P.N."/>
            <person name="Hall L.M.C."/>
            <person name="Coates A.R.M."/>
        </authorList>
    </citation>
    <scope>NUCLEOTIDE SEQUENCE [GENOMIC DNA]</scope>
    <source>
        <strain>ATCC 25618 / H37Rv</strain>
    </source>
</reference>
<reference key="3">
    <citation type="journal article" date="1989" name="Nucleic Acids Res.">
        <title>The Mycobacterium tuberculosis BCG-a protein has homology with the Escherichia coli GroES protein.</title>
        <authorList>
            <person name="Shinnick T.M."/>
            <person name="Plikaytis B.P."/>
            <person name="Hyche A.D."/>
            <person name="van Landingham R.M."/>
            <person name="Walker L.L."/>
        </authorList>
    </citation>
    <scope>NUCLEOTIDE SEQUENCE [GENOMIC DNA]</scope>
    <source>
        <strain>ATCC 35801 / TMC 107 / Erdman</strain>
    </source>
</reference>
<reference key="4">
    <citation type="journal article" date="1993" name="Proc. Natl. Acad. Sci. U.S.A.">
        <title>Mycobacterium tuberculosis expresses two chaperonin-60 homologs.</title>
        <authorList>
            <person name="Kong T.H."/>
            <person name="Coates A.R.M."/>
            <person name="Butcher P.D."/>
            <person name="Hickman C.J."/>
            <person name="Shinnick T.M."/>
        </authorList>
    </citation>
    <scope>NUCLEOTIDE SEQUENCE [GENOMIC DNA]</scope>
    <source>
        <strain>ATCC 35801 / TMC 107 / Erdman</strain>
    </source>
</reference>
<reference key="5">
    <citation type="journal article" date="1998" name="Nature">
        <title>Deciphering the biology of Mycobacterium tuberculosis from the complete genome sequence.</title>
        <authorList>
            <person name="Cole S.T."/>
            <person name="Brosch R."/>
            <person name="Parkhill J."/>
            <person name="Garnier T."/>
            <person name="Churcher C.M."/>
            <person name="Harris D.E."/>
            <person name="Gordon S.V."/>
            <person name="Eiglmeier K."/>
            <person name="Gas S."/>
            <person name="Barry C.E. III"/>
            <person name="Tekaia F."/>
            <person name="Badcock K."/>
            <person name="Basham D."/>
            <person name="Brown D."/>
            <person name="Chillingworth T."/>
            <person name="Connor R."/>
            <person name="Davies R.M."/>
            <person name="Devlin K."/>
            <person name="Feltwell T."/>
            <person name="Gentles S."/>
            <person name="Hamlin N."/>
            <person name="Holroyd S."/>
            <person name="Hornsby T."/>
            <person name="Jagels K."/>
            <person name="Krogh A."/>
            <person name="McLean J."/>
            <person name="Moule S."/>
            <person name="Murphy L.D."/>
            <person name="Oliver S."/>
            <person name="Osborne J."/>
            <person name="Quail M.A."/>
            <person name="Rajandream M.A."/>
            <person name="Rogers J."/>
            <person name="Rutter S."/>
            <person name="Seeger K."/>
            <person name="Skelton S."/>
            <person name="Squares S."/>
            <person name="Squares R."/>
            <person name="Sulston J.E."/>
            <person name="Taylor K."/>
            <person name="Whitehead S."/>
            <person name="Barrell B.G."/>
        </authorList>
    </citation>
    <scope>NUCLEOTIDE SEQUENCE [LARGE SCALE GENOMIC DNA]</scope>
    <source>
        <strain>ATCC 25618 / H37Rv</strain>
    </source>
</reference>
<reference key="6">
    <citation type="journal article" date="1992" name="J. Immunol.">
        <title>Immunoreactivity of a 10-kDa antigen of Mycobacterium tuberculosis.</title>
        <authorList>
            <person name="Barnes P.F."/>
            <person name="Mehra V."/>
            <person name="Rivoire B."/>
            <person name="Fong S.J."/>
            <person name="Brennan P.J."/>
            <person name="Voegtline M.S."/>
            <person name="Minden P."/>
            <person name="Houghten R.A."/>
            <person name="Bloom B.R."/>
            <person name="Modlin R.L."/>
        </authorList>
    </citation>
    <scope>PROTEIN SEQUENCE OF 2-16</scope>
</reference>
<reference key="7">
    <citation type="journal article" date="2008" name="Infect. Immun.">
        <title>A Mycobacterium tuberculosis mutant lacking the groEL homologue cpn60.1 is viable but fails to induce an inflammatory response in animal models of infection.</title>
        <authorList>
            <person name="Hu Y."/>
            <person name="Henderson B."/>
            <person name="Lund P.A."/>
            <person name="Tormay P."/>
            <person name="Ahmed M.T."/>
            <person name="Gurcha S.S."/>
            <person name="Besra G.S."/>
            <person name="Coates A.R."/>
        </authorList>
    </citation>
    <scope>INDUCTION</scope>
    <scope>DISRUPTION PHENOTYPE</scope>
    <source>
        <strain>ATCC 25618 / H37Rv</strain>
    </source>
</reference>
<reference key="8">
    <citation type="journal article" date="2010" name="PLoS ONE">
        <title>Prokaryotic ubiquitin-like protein (Pup) proteome of Mycobacterium tuberculosis.</title>
        <authorList>
            <person name="Festa R.A."/>
            <person name="McAllister F."/>
            <person name="Pearce M.J."/>
            <person name="Mintseris J."/>
            <person name="Burns K.E."/>
            <person name="Gygi S.P."/>
            <person name="Darwin K.H."/>
        </authorList>
    </citation>
    <scope>PUPYLATION AT LYS-100</scope>
    <scope>IDENTIFICATION BY MASS SPECTROMETRY</scope>
    <source>
        <strain>ATCC 25618 / H37Rv</strain>
    </source>
</reference>
<reference key="9">
    <citation type="journal article" date="2011" name="Mol. Cell. Proteomics">
        <title>Proteogenomic analysis of Mycobacterium tuberculosis by high resolution mass spectrometry.</title>
        <authorList>
            <person name="Kelkar D.S."/>
            <person name="Kumar D."/>
            <person name="Kumar P."/>
            <person name="Balakrishnan L."/>
            <person name="Muthusamy B."/>
            <person name="Yadav A.K."/>
            <person name="Shrivastava P."/>
            <person name="Marimuthu A."/>
            <person name="Anand S."/>
            <person name="Sundaram H."/>
            <person name="Kingsbury R."/>
            <person name="Harsha H.C."/>
            <person name="Nair B."/>
            <person name="Prasad T.S."/>
            <person name="Chauhan D.S."/>
            <person name="Katoch K."/>
            <person name="Katoch V.M."/>
            <person name="Kumar P."/>
            <person name="Chaerkady R."/>
            <person name="Ramachandran S."/>
            <person name="Dash D."/>
            <person name="Pandey A."/>
        </authorList>
    </citation>
    <scope>ACETYLATION [LARGE SCALE ANALYSIS] AT ALA-2</scope>
    <scope>CLEAVAGE OF INITIATOR METHIONINE [LARGE SCALE ANALYSIS]</scope>
    <scope>IDENTIFICATION BY MASS SPECTROMETRY [LARGE SCALE ANALYSIS]</scope>
    <source>
        <strain>ATCC 25618 / H37Rv</strain>
    </source>
</reference>
<reference key="10">
    <citation type="journal article" date="2016" name="Sci. Rep.">
        <title>Biochemical evidence for relaxed substrate specificity of Nalpha-acetyltransferase (Rv3420c/rimI) of Mycobacterium tuberculosis.</title>
        <authorList>
            <person name="Pathak D."/>
            <person name="Bhat A.H."/>
            <person name="Sapehia V."/>
            <person name="Rai J."/>
            <person name="Rao A."/>
        </authorList>
    </citation>
    <scope>INTERACTION WITH RIMI</scope>
    <scope>ACETYLATION AT ALA-2</scope>
    <scope>CLEAVAGE OF INITIATOR METHIONINE</scope>
</reference>
<reference key="11">
    <citation type="journal article" date="2001" name="Curr. Sci.">
        <title>Three-dimensional structure of Mycobacterium tuberculosis chaperonin-10 reveals a partially stable conformation for its mobile loop.</title>
        <authorList>
            <person name="Taneja B."/>
            <person name="Mande S.C."/>
        </authorList>
    </citation>
    <scope>X-RAY CRYSTALLOGRAPHY (3.50 ANGSTROMS) OF 2-100</scope>
    <scope>SUBUNIT</scope>
    <source>
        <strain>ATCC 25618 / H37Rv</strain>
    </source>
</reference>
<reference key="12">
    <citation type="journal article" date="2003" name="J. Bacteriol.">
        <title>Mycobacterium tuberculosis chaperonin 10 heptamers self-associate through their biologically active loops.</title>
        <authorList>
            <person name="Roberts M.M."/>
            <person name="Coker A.R."/>
            <person name="Fossati G."/>
            <person name="Mascagni P."/>
            <person name="Coates A.R."/>
            <person name="Wood S.P."/>
        </authorList>
    </citation>
    <scope>X-RAY CRYSTALLOGRAPHY (2.80 ANGSTROMS) OF 2-100</scope>
    <scope>SUBUNIT</scope>
</reference>
<reference key="13">
    <citation type="submission" date="2003-05" db="PDB data bank">
        <title>Solution Structure of 1-25 fragment of Cpn10 from Mycobacterium tuberculosis.</title>
        <authorList>
            <person name="Ciutti A."/>
            <person name="Spiga O."/>
            <person name="Giannozzi E."/>
            <person name="Scarselli M."/>
            <person name="Di Maro D."/>
            <person name="Calamandrei D."/>
            <person name="Niccolai N."/>
            <person name="Bernini A."/>
        </authorList>
    </citation>
    <scope>STRUCTURE BY NMR OF 2-26</scope>
</reference>
<gene>
    <name evidence="1" type="primary">groES</name>
    <name type="synonym">cpn10</name>
    <name evidence="1" type="synonym">groS</name>
    <name type="synonym">mopB</name>
    <name type="ordered locus">Rv3418c</name>
    <name type="ORF">MTCY78.11</name>
</gene>
<proteinExistence type="evidence at protein level"/>
<feature type="initiator methionine" description="Removed" evidence="3 6 11">
    <location>
        <position position="1"/>
    </location>
</feature>
<feature type="chain" id="PRO_0000174788" description="Co-chaperonin GroES">
    <location>
        <begin position="2"/>
        <end position="100"/>
    </location>
</feature>
<feature type="modified residue" description="N-acetylalanine" evidence="6 11">
    <location>
        <position position="2"/>
    </location>
</feature>
<feature type="cross-link" description="Isoglutamyl lysine isopeptide (Lys-Gln) (interchain with Q-Cter in protein Pup)" evidence="5">
    <location>
        <position position="100"/>
    </location>
</feature>
<feature type="strand" evidence="13">
    <location>
        <begin position="5"/>
        <end position="8"/>
    </location>
</feature>
<feature type="strand" evidence="13">
    <location>
        <begin position="12"/>
        <end position="17"/>
    </location>
</feature>
<feature type="strand" evidence="14">
    <location>
        <begin position="19"/>
        <end position="24"/>
    </location>
</feature>
<feature type="turn" evidence="12">
    <location>
        <begin position="25"/>
        <end position="27"/>
    </location>
</feature>
<feature type="strand" evidence="13">
    <location>
        <begin position="37"/>
        <end position="46"/>
    </location>
</feature>
<feature type="strand" evidence="13">
    <location>
        <begin position="53"/>
        <end position="56"/>
    </location>
</feature>
<feature type="strand" evidence="13">
    <location>
        <begin position="68"/>
        <end position="72"/>
    </location>
</feature>
<feature type="strand" evidence="13">
    <location>
        <begin position="77"/>
        <end position="81"/>
    </location>
</feature>
<feature type="strand" evidence="13">
    <location>
        <begin position="84"/>
        <end position="90"/>
    </location>
</feature>
<feature type="helix" evidence="13">
    <location>
        <begin position="91"/>
        <end position="93"/>
    </location>
</feature>
<feature type="strand" evidence="13">
    <location>
        <begin position="94"/>
        <end position="99"/>
    </location>
</feature>